<reference key="1">
    <citation type="journal article" date="1996" name="Proc. Natl. Acad. Sci. U.S.A.">
        <title>A common mechanism for the biosynthesis of methoxy and cyclopropyl mycolic acids in Mycobacterium tuberculosis.</title>
        <authorList>
            <person name="Yuan Y."/>
            <person name="Barry C.E. III"/>
        </authorList>
    </citation>
    <scope>NUCLEOTIDE SEQUENCE [GENOMIC DNA]</scope>
    <scope>FUNCTION IN OXYGEN-CONTAINING MYCOLATES BIOSYNTHESIS</scope>
    <scope>CATALYTIC ACTIVITY</scope>
    <scope>PATHWAY</scope>
    <source>
        <strain>ATCC 25177 / H37Ra</strain>
    </source>
</reference>
<reference key="2">
    <citation type="journal article" date="2008" name="PLoS ONE">
        <title>Genetic basis of virulence attenuation revealed by comparative genomic analysis of Mycobacterium tuberculosis strain H37Ra versus H37Rv.</title>
        <authorList>
            <person name="Zheng H."/>
            <person name="Lu L."/>
            <person name="Wang B."/>
            <person name="Pu S."/>
            <person name="Zhang X."/>
            <person name="Zhu G."/>
            <person name="Shi W."/>
            <person name="Zhang L."/>
            <person name="Wang H."/>
            <person name="Wang S."/>
            <person name="Zhao G."/>
            <person name="Zhang Y."/>
        </authorList>
    </citation>
    <scope>NUCLEOTIDE SEQUENCE [LARGE SCALE GENOMIC DNA]</scope>
    <source>
        <strain>ATCC 25177 / H37Ra</strain>
    </source>
</reference>
<comment type="function">
    <text evidence="3">Catalyzes the conversion of a double bond to a cis cyclopropane ring at the distal position of an alpha mycolic acid via the transfer of a methylene group from S-adenosyl-L-methionine. MmaA2 also catalyzes the biosynthesis of the cis-cyclopropanated methoxymycolates. Cyclopropanated mycolic acids are key factors participating in cell envelope permeability, host immunomodulation and persistence.</text>
</comment>
<comment type="catalytic activity">
    <reaction evidence="3">
        <text>a 1-acyl-2-(9Z)-enoyl-sn-glycero-3-phospholipid + S-adenosyl-L-methionine = a 1-acyl-2-(9-cyclopronane)-acyl-sn-glycero-3-phospholipid + S-adenosyl-L-homocysteine + H(+)</text>
        <dbReference type="Rhea" id="RHEA:11988"/>
        <dbReference type="ChEBI" id="CHEBI:15378"/>
        <dbReference type="ChEBI" id="CHEBI:57856"/>
        <dbReference type="ChEBI" id="CHEBI:59789"/>
        <dbReference type="ChEBI" id="CHEBI:76593"/>
        <dbReference type="ChEBI" id="CHEBI:76594"/>
        <dbReference type="EC" id="2.1.1.79"/>
    </reaction>
</comment>
<comment type="pathway">
    <text evidence="5">Lipid metabolism; mycolic acid biosynthesis.</text>
</comment>
<comment type="similarity">
    <text evidence="4">Belongs to the CFA/CMAS family.</text>
</comment>
<comment type="sequence caution" evidence="4">
    <conflict type="erroneous initiation">
        <sequence resource="EMBL-CDS" id="AAC44617"/>
    </conflict>
    <text>Extended N-terminus.</text>
</comment>
<accession>A5U029</accession>
<accession>P72026</accession>
<proteinExistence type="evidence at protein level"/>
<name>MMAA2_MYCTA</name>
<organism>
    <name type="scientific">Mycobacterium tuberculosis (strain ATCC 25177 / H37Ra)</name>
    <dbReference type="NCBI Taxonomy" id="419947"/>
    <lineage>
        <taxon>Bacteria</taxon>
        <taxon>Bacillati</taxon>
        <taxon>Actinomycetota</taxon>
        <taxon>Actinomycetes</taxon>
        <taxon>Mycobacteriales</taxon>
        <taxon>Mycobacteriaceae</taxon>
        <taxon>Mycobacterium</taxon>
        <taxon>Mycobacterium tuberculosis complex</taxon>
    </lineage>
</organism>
<feature type="chain" id="PRO_0000398361" description="Cyclopropane mycolic acid synthase MmaA2">
    <location>
        <begin position="1"/>
        <end position="287"/>
    </location>
</feature>
<feature type="active site" evidence="1">
    <location>
        <position position="269"/>
    </location>
</feature>
<feature type="binding site" evidence="2">
    <location>
        <begin position="33"/>
        <end position="34"/>
    </location>
    <ligand>
        <name>S-adenosyl-L-methionine</name>
        <dbReference type="ChEBI" id="CHEBI:59789"/>
    </ligand>
</feature>
<feature type="binding site" evidence="2">
    <location>
        <begin position="72"/>
        <end position="74"/>
    </location>
    <ligand>
        <name>S-adenosyl-L-methionine</name>
        <dbReference type="ChEBI" id="CHEBI:59789"/>
    </ligand>
</feature>
<feature type="binding site" evidence="2">
    <location>
        <begin position="94"/>
        <end position="99"/>
    </location>
    <ligand>
        <name>S-adenosyl-L-methionine</name>
        <dbReference type="ChEBI" id="CHEBI:59789"/>
    </ligand>
</feature>
<feature type="binding site" evidence="2">
    <location>
        <begin position="123"/>
        <end position="124"/>
    </location>
    <ligand>
        <name>S-adenosyl-L-methionine</name>
        <dbReference type="ChEBI" id="CHEBI:59789"/>
    </ligand>
</feature>
<feature type="binding site" evidence="2">
    <location>
        <position position="136"/>
    </location>
    <ligand>
        <name>S-adenosyl-L-methionine</name>
        <dbReference type="ChEBI" id="CHEBI:59789"/>
    </ligand>
</feature>
<gene>
    <name type="primary">mmaA2</name>
    <name type="synonym">mma2</name>
    <name type="ordered locus">MRA_0655</name>
</gene>
<protein>
    <recommendedName>
        <fullName>Cyclopropane mycolic acid synthase MmaA2</fullName>
        <shortName>CMAS</shortName>
        <ecNumber evidence="3">2.1.1.79</ecNumber>
    </recommendedName>
    <alternativeName>
        <fullName>Cyclopropane-fatty-acyl-phospholipid synthase</fullName>
        <shortName>CFA synthase</shortName>
    </alternativeName>
    <alternativeName>
        <fullName>Mycolic acid methyltransferase</fullName>
        <shortName>MA-MT</shortName>
    </alternativeName>
    <alternativeName>
        <fullName>S-adenosylmethionine-dependent methyltransferase</fullName>
        <shortName>AdoMet-MT</shortName>
        <shortName>SAM-MT</shortName>
    </alternativeName>
</protein>
<sequence>MVNDLTPHFEDVQAHYDLSDDFFRLFLDPTQTYSCAHFEREDMTLEEAQIAKIDLALGKLGLQPGMTLLDIGCGWGATMRRAIAQYDVNVVGLTLSKNQAAHVQKSFDEMDTPRDRRVLLAGWEQFNEPVDRIVSIGAFEHFGHDRHADFFARAHKILPPDGVLLLHTITGLTRQQMVDHGLPLTLWLARFLKFIATEIFPGGQPPTIEMVEEQSAKTGFTLTRRQSLQPHYARTLDLWAEALQEHKSEAIAIQSEEVYERYMKYLTGCAKLFRVGYIDVNQFTLAK</sequence>
<evidence type="ECO:0000250" key="1"/>
<evidence type="ECO:0000250" key="2">
    <source>
        <dbReference type="UniProtKB" id="Q79FX6"/>
    </source>
</evidence>
<evidence type="ECO:0000269" key="3">
    <source>
    </source>
</evidence>
<evidence type="ECO:0000305" key="4"/>
<evidence type="ECO:0000305" key="5">
    <source>
    </source>
</evidence>
<dbReference type="EC" id="2.1.1.79" evidence="3"/>
<dbReference type="EMBL" id="U66108">
    <property type="protein sequence ID" value="AAC44617.1"/>
    <property type="status" value="ALT_INIT"/>
    <property type="molecule type" value="Genomic_DNA"/>
</dbReference>
<dbReference type="EMBL" id="CP000611">
    <property type="protein sequence ID" value="ABQ72379.1"/>
    <property type="molecule type" value="Genomic_DNA"/>
</dbReference>
<dbReference type="PIR" id="A70614">
    <property type="entry name" value="A70614"/>
</dbReference>
<dbReference type="RefSeq" id="WP_003900985.1">
    <property type="nucleotide sequence ID" value="NZ_CP016972.1"/>
</dbReference>
<dbReference type="SMR" id="A5U029"/>
<dbReference type="GeneID" id="45424604"/>
<dbReference type="KEGG" id="mra:MRA_0655"/>
<dbReference type="eggNOG" id="COG2230">
    <property type="taxonomic scope" value="Bacteria"/>
</dbReference>
<dbReference type="HOGENOM" id="CLU_026434_3_0_11"/>
<dbReference type="UniPathway" id="UPA00915"/>
<dbReference type="Proteomes" id="UP000001988">
    <property type="component" value="Chromosome"/>
</dbReference>
<dbReference type="GO" id="GO:0008825">
    <property type="term" value="F:cyclopropane-fatty-acyl-phospholipid synthase activity"/>
    <property type="evidence" value="ECO:0000315"/>
    <property type="project" value="UniProtKB"/>
</dbReference>
<dbReference type="GO" id="GO:0008168">
    <property type="term" value="F:methyltransferase activity"/>
    <property type="evidence" value="ECO:0000315"/>
    <property type="project" value="UniProtKB"/>
</dbReference>
<dbReference type="GO" id="GO:0008610">
    <property type="term" value="P:lipid biosynthetic process"/>
    <property type="evidence" value="ECO:0000315"/>
    <property type="project" value="UniProtKB"/>
</dbReference>
<dbReference type="GO" id="GO:0032259">
    <property type="term" value="P:methylation"/>
    <property type="evidence" value="ECO:0007669"/>
    <property type="project" value="UniProtKB-KW"/>
</dbReference>
<dbReference type="CDD" id="cd02440">
    <property type="entry name" value="AdoMet_MTases"/>
    <property type="match status" value="1"/>
</dbReference>
<dbReference type="FunFam" id="3.40.50.150:FF:000115">
    <property type="entry name" value="Cyclopropane mycolic acid synthase 1"/>
    <property type="match status" value="1"/>
</dbReference>
<dbReference type="Gene3D" id="3.40.50.150">
    <property type="entry name" value="Vaccinia Virus protein VP39"/>
    <property type="match status" value="1"/>
</dbReference>
<dbReference type="InterPro" id="IPR050723">
    <property type="entry name" value="CFA/CMAS"/>
</dbReference>
<dbReference type="InterPro" id="IPR003333">
    <property type="entry name" value="CMAS"/>
</dbReference>
<dbReference type="InterPro" id="IPR047672">
    <property type="entry name" value="CMAS_actinobact"/>
</dbReference>
<dbReference type="InterPro" id="IPR029063">
    <property type="entry name" value="SAM-dependent_MTases_sf"/>
</dbReference>
<dbReference type="NCBIfam" id="NF040660">
    <property type="entry name" value="mycolic_MTase"/>
    <property type="match status" value="1"/>
</dbReference>
<dbReference type="PANTHER" id="PTHR43667">
    <property type="entry name" value="CYCLOPROPANE-FATTY-ACYL-PHOSPHOLIPID SYNTHASE"/>
    <property type="match status" value="1"/>
</dbReference>
<dbReference type="PANTHER" id="PTHR43667:SF1">
    <property type="entry name" value="CYCLOPROPANE-FATTY-ACYL-PHOSPHOLIPID SYNTHASE"/>
    <property type="match status" value="1"/>
</dbReference>
<dbReference type="Pfam" id="PF02353">
    <property type="entry name" value="CMAS"/>
    <property type="match status" value="1"/>
</dbReference>
<dbReference type="PIRSF" id="PIRSF003085">
    <property type="entry name" value="CMAS"/>
    <property type="match status" value="1"/>
</dbReference>
<dbReference type="SUPFAM" id="SSF53335">
    <property type="entry name" value="S-adenosyl-L-methionine-dependent methyltransferases"/>
    <property type="match status" value="1"/>
</dbReference>
<keyword id="KW-0444">Lipid biosynthesis</keyword>
<keyword id="KW-0443">Lipid metabolism</keyword>
<keyword id="KW-0489">Methyltransferase</keyword>
<keyword id="KW-1185">Reference proteome</keyword>
<keyword id="KW-0949">S-adenosyl-L-methionine</keyword>
<keyword id="KW-0808">Transferase</keyword>